<feature type="chain" id="PRO_0000048487" description="Myeloproliferative leukemia protein">
    <location>
        <begin position="1"/>
        <end position="184"/>
    </location>
</feature>
<feature type="transmembrane region" description="Helical" evidence="1">
    <location>
        <begin position="44"/>
        <end position="64"/>
    </location>
</feature>
<feature type="short sequence motif" description="WSXWS motif">
    <location>
        <begin position="26"/>
        <end position="30"/>
    </location>
</feature>
<feature type="short sequence motif" description="Box 1 motif">
    <location>
        <begin position="80"/>
        <end position="88"/>
    </location>
</feature>
<dbReference type="EMBL" id="M60350">
    <property type="protein sequence ID" value="AAA77654.1"/>
    <property type="molecule type" value="Genomic_DNA"/>
</dbReference>
<dbReference type="SMR" id="P40931"/>
<dbReference type="GO" id="GO:0016020">
    <property type="term" value="C:membrane"/>
    <property type="evidence" value="ECO:0007669"/>
    <property type="project" value="UniProtKB-SubCell"/>
</dbReference>
<dbReference type="GO" id="GO:0038164">
    <property type="term" value="F:thrombopoietin receptor activity"/>
    <property type="evidence" value="ECO:0007669"/>
    <property type="project" value="TreeGrafter"/>
</dbReference>
<dbReference type="Gene3D" id="2.60.40.10">
    <property type="entry name" value="Immunoglobulins"/>
    <property type="match status" value="1"/>
</dbReference>
<dbReference type="InterPro" id="IPR036116">
    <property type="entry name" value="FN3_sf"/>
</dbReference>
<dbReference type="InterPro" id="IPR013783">
    <property type="entry name" value="Ig-like_fold"/>
</dbReference>
<dbReference type="PANTHER" id="PTHR23037">
    <property type="entry name" value="CYTOKINE RECEPTOR"/>
    <property type="match status" value="1"/>
</dbReference>
<dbReference type="PANTHER" id="PTHR23037:SF31">
    <property type="entry name" value="THROMBOPOIETIN RECEPTOR"/>
    <property type="match status" value="1"/>
</dbReference>
<dbReference type="SUPFAM" id="SSF49265">
    <property type="entry name" value="Fibronectin type III"/>
    <property type="match status" value="1"/>
</dbReference>
<keyword id="KW-0472">Membrane</keyword>
<keyword id="KW-0553">Oncogene</keyword>
<keyword id="KW-0675">Receptor</keyword>
<keyword id="KW-0812">Transmembrane</keyword>
<keyword id="KW-1133">Transmembrane helix</keyword>
<sequence length="184" mass="20558">LELRPRARYSLQLRARLNGPTYQGPWSAWSPPARVSTGSETAWITLVTALLLVLSLSALLGLLLLKWQFPAHYRRLRHALWPSLPDLHRVLGQYLRDTAALSPSKATVTDSCEEVEPSLLEILPKSSESTPLPLCPSQPQMDYRGLQPCLRTMPLSVCPPMAETGSCCTTHIANHSYLPLSYWQ</sequence>
<proteinExistence type="inferred from homology"/>
<protein>
    <recommendedName>
        <fullName>Myeloproliferative leukemia protein</fullName>
    </recommendedName>
</protein>
<comment type="function">
    <text>Truncated form of the receptor for thrombopoietin.</text>
</comment>
<comment type="subcellular location">
    <subcellularLocation>
        <location evidence="2">Membrane</location>
        <topology evidence="2">Single-pass membrane protein</topology>
    </subcellularLocation>
</comment>
<comment type="domain">
    <text>The WSXWS motif appears to be necessary for proper protein folding and thereby efficient intracellular transport and cell-surface receptor binding.</text>
</comment>
<comment type="domain">
    <text>The box 1 motif is required for JAK interaction and/or activation.</text>
</comment>
<comment type="miscellaneous">
    <text>This protein is synthesized as an Env-Mpl polyprotein.</text>
</comment>
<comment type="similarity">
    <text evidence="2">Belongs to the type I cytokine receptor family. Type 1 subfamily.</text>
</comment>
<accession>P40931</accession>
<name>MPL_MPLV</name>
<reference key="1">
    <citation type="journal article" date="1990" name="Cell">
        <title>A putative truncated cytokine receptor gene transduced by the myeloproliferative leukemia virus immortalizes hematopoietic progenitors.</title>
        <authorList>
            <person name="Souyri M."/>
            <person name="Vigon I."/>
            <person name="Penciolelli J.-F."/>
            <person name="Heard J.-M."/>
            <person name="Tambourin P."/>
            <person name="Wendling F."/>
        </authorList>
    </citation>
    <scope>NUCLEOTIDE SEQUENCE [GENOMIC DNA]</scope>
</reference>
<organismHost>
    <name type="scientific">Mus musculus</name>
    <name type="common">Mouse</name>
    <dbReference type="NCBI Taxonomy" id="10090"/>
</organismHost>
<gene>
    <name type="primary">V-MPL</name>
</gene>
<organism>
    <name type="scientific">Myeloproliferative leukemia virus</name>
    <name type="common">MpLV</name>
    <dbReference type="NCBI Taxonomy" id="11973"/>
    <lineage>
        <taxon>Viruses</taxon>
        <taxon>Riboviria</taxon>
        <taxon>Pararnavirae</taxon>
        <taxon>Artverviricota</taxon>
        <taxon>Revtraviricetes</taxon>
        <taxon>Ortervirales</taxon>
        <taxon>Retroviridae</taxon>
    </lineage>
</organism>
<evidence type="ECO:0000255" key="1"/>
<evidence type="ECO:0000305" key="2"/>